<comment type="function">
    <text evidence="1">Non-catalytic component of the exosome, which is a complex involved in RNA degradation. Contributes to the structuring of the Rrp41 active site.</text>
</comment>
<comment type="subunit">
    <text evidence="1">Component of the archaeal exosome complex. Forms a hexameric ring-like arrangement composed of 3 Rrp41-Rrp42 heterodimers. The hexameric ring associates with a trimer of Rrp4 and/or Csl4 subunits.</text>
</comment>
<comment type="subcellular location">
    <subcellularLocation>
        <location evidence="1">Cytoplasm</location>
    </subcellularLocation>
</comment>
<comment type="similarity">
    <text evidence="1">Belongs to the RNase PH family. Rrp42 subfamily.</text>
</comment>
<keyword id="KW-0963">Cytoplasm</keyword>
<keyword id="KW-0271">Exosome</keyword>
<keyword id="KW-1185">Reference proteome</keyword>
<proteinExistence type="inferred from homology"/>
<feature type="chain" id="PRO_0000139995" description="Exosome complex component Rrp42">
    <location>
        <begin position="1"/>
        <end position="276"/>
    </location>
</feature>
<reference key="1">
    <citation type="journal article" date="1999" name="DNA Res.">
        <title>Complete genome sequence of an aerobic hyper-thermophilic crenarchaeon, Aeropyrum pernix K1.</title>
        <authorList>
            <person name="Kawarabayasi Y."/>
            <person name="Hino Y."/>
            <person name="Horikawa H."/>
            <person name="Yamazaki S."/>
            <person name="Haikawa Y."/>
            <person name="Jin-no K."/>
            <person name="Takahashi M."/>
            <person name="Sekine M."/>
            <person name="Baba S."/>
            <person name="Ankai A."/>
            <person name="Kosugi H."/>
            <person name="Hosoyama A."/>
            <person name="Fukui S."/>
            <person name="Nagai Y."/>
            <person name="Nishijima K."/>
            <person name="Nakazawa H."/>
            <person name="Takamiya M."/>
            <person name="Masuda S."/>
            <person name="Funahashi T."/>
            <person name="Tanaka T."/>
            <person name="Kudoh Y."/>
            <person name="Yamazaki J."/>
            <person name="Kushida N."/>
            <person name="Oguchi A."/>
            <person name="Aoki K."/>
            <person name="Kubota K."/>
            <person name="Nakamura Y."/>
            <person name="Nomura N."/>
            <person name="Sako Y."/>
            <person name="Kikuchi H."/>
        </authorList>
    </citation>
    <scope>NUCLEOTIDE SEQUENCE [LARGE SCALE GENOMIC DNA]</scope>
    <source>
        <strain>ATCC 700893 / DSM 11879 / JCM 9820 / NBRC 100138 / K1</strain>
    </source>
</reference>
<name>RRP42_AERPE</name>
<gene>
    <name evidence="1" type="primary">rrp42</name>
    <name type="ordered locus">APE_1445</name>
</gene>
<organism>
    <name type="scientific">Aeropyrum pernix (strain ATCC 700893 / DSM 11879 / JCM 9820 / NBRC 100138 / K1)</name>
    <dbReference type="NCBI Taxonomy" id="272557"/>
    <lineage>
        <taxon>Archaea</taxon>
        <taxon>Thermoproteota</taxon>
        <taxon>Thermoprotei</taxon>
        <taxon>Desulfurococcales</taxon>
        <taxon>Desulfurococcaceae</taxon>
        <taxon>Aeropyrum</taxon>
    </lineage>
</organism>
<accession>Q9YC05</accession>
<protein>
    <recommendedName>
        <fullName evidence="1">Exosome complex component Rrp42</fullName>
    </recommendedName>
</protein>
<evidence type="ECO:0000255" key="1">
    <source>
        <dbReference type="HAMAP-Rule" id="MF_00622"/>
    </source>
</evidence>
<dbReference type="EMBL" id="BA000002">
    <property type="protein sequence ID" value="BAA80443.1"/>
    <property type="molecule type" value="Genomic_DNA"/>
</dbReference>
<dbReference type="PIR" id="E72623">
    <property type="entry name" value="E72623"/>
</dbReference>
<dbReference type="RefSeq" id="WP_010866375.1">
    <property type="nucleotide sequence ID" value="NC_000854.2"/>
</dbReference>
<dbReference type="SMR" id="Q9YC05"/>
<dbReference type="STRING" id="272557.APE_1445"/>
<dbReference type="EnsemblBacteria" id="BAA80443">
    <property type="protein sequence ID" value="BAA80443"/>
    <property type="gene ID" value="APE_1445"/>
</dbReference>
<dbReference type="GeneID" id="1446020"/>
<dbReference type="KEGG" id="ape:APE_1445"/>
<dbReference type="PATRIC" id="fig|272557.25.peg.977"/>
<dbReference type="eggNOG" id="arCOG01574">
    <property type="taxonomic scope" value="Archaea"/>
</dbReference>
<dbReference type="Proteomes" id="UP000002518">
    <property type="component" value="Chromosome"/>
</dbReference>
<dbReference type="GO" id="GO:0000177">
    <property type="term" value="C:cytoplasmic exosome (RNase complex)"/>
    <property type="evidence" value="ECO:0007669"/>
    <property type="project" value="TreeGrafter"/>
</dbReference>
<dbReference type="GO" id="GO:0035925">
    <property type="term" value="F:mRNA 3'-UTR AU-rich region binding"/>
    <property type="evidence" value="ECO:0007669"/>
    <property type="project" value="TreeGrafter"/>
</dbReference>
<dbReference type="GO" id="GO:0016075">
    <property type="term" value="P:rRNA catabolic process"/>
    <property type="evidence" value="ECO:0007669"/>
    <property type="project" value="TreeGrafter"/>
</dbReference>
<dbReference type="CDD" id="cd11365">
    <property type="entry name" value="RNase_PH_archRRP42"/>
    <property type="match status" value="1"/>
</dbReference>
<dbReference type="FunFam" id="3.30.230.70:FF:000017">
    <property type="entry name" value="Exosome complex component Rrp42"/>
    <property type="match status" value="1"/>
</dbReference>
<dbReference type="Gene3D" id="3.30.230.70">
    <property type="entry name" value="GHMP Kinase, N-terminal domain"/>
    <property type="match status" value="1"/>
</dbReference>
<dbReference type="HAMAP" id="MF_00622">
    <property type="entry name" value="Exosome_Rrp42"/>
    <property type="match status" value="1"/>
</dbReference>
<dbReference type="InterPro" id="IPR001247">
    <property type="entry name" value="ExoRNase_PH_dom1"/>
</dbReference>
<dbReference type="InterPro" id="IPR015847">
    <property type="entry name" value="ExoRNase_PH_dom2"/>
</dbReference>
<dbReference type="InterPro" id="IPR036345">
    <property type="entry name" value="ExoRNase_PH_dom2_sf"/>
</dbReference>
<dbReference type="InterPro" id="IPR050590">
    <property type="entry name" value="Exosome_comp_Rrp42_subfam"/>
</dbReference>
<dbReference type="InterPro" id="IPR027408">
    <property type="entry name" value="PNPase/RNase_PH_dom_sf"/>
</dbReference>
<dbReference type="InterPro" id="IPR020568">
    <property type="entry name" value="Ribosomal_Su5_D2-typ_SF"/>
</dbReference>
<dbReference type="InterPro" id="IPR020869">
    <property type="entry name" value="Rrp42_archaea"/>
</dbReference>
<dbReference type="NCBIfam" id="NF003282">
    <property type="entry name" value="PRK04282.1-1"/>
    <property type="match status" value="1"/>
</dbReference>
<dbReference type="PANTHER" id="PTHR11097:SF8">
    <property type="entry name" value="EXOSOME COMPLEX COMPONENT RRP42"/>
    <property type="match status" value="1"/>
</dbReference>
<dbReference type="PANTHER" id="PTHR11097">
    <property type="entry name" value="EXOSOME COMPLEX EXONUCLEASE RIBOSOMAL RNA PROCESSING PROTEIN"/>
    <property type="match status" value="1"/>
</dbReference>
<dbReference type="Pfam" id="PF01138">
    <property type="entry name" value="RNase_PH"/>
    <property type="match status" value="1"/>
</dbReference>
<dbReference type="Pfam" id="PF03725">
    <property type="entry name" value="RNase_PH_C"/>
    <property type="match status" value="1"/>
</dbReference>
<dbReference type="SUPFAM" id="SSF55666">
    <property type="entry name" value="Ribonuclease PH domain 2-like"/>
    <property type="match status" value="1"/>
</dbReference>
<dbReference type="SUPFAM" id="SSF54211">
    <property type="entry name" value="Ribosomal protein S5 domain 2-like"/>
    <property type="match status" value="1"/>
</dbReference>
<sequence>MSITPHRLPVAPVIVREAYLSLLRKGWRPGDRDLKTPRNVKIETGIIEKAEGSALVKLGKTQVIAGVKAGVGAPFKDTPNQGVLTVHAEFVPLASPVFEPGPPDENAIELARVVDRSLREVGAVDLESLVIRPGEKVWVLWVDLYIIDHDGNLFDASMLATMAVLLTARLPRYEESETGEIIISKEGEGEELKVKTRVVTVTTAKIDRYIVVDPNIEEEAVSDVRLVTAVDENGRIVGLQKTGMGSLTEADIETMIGYSLEASKVYFKALEEAIKP</sequence>